<dbReference type="EC" id="3.5.1.5" evidence="1"/>
<dbReference type="EMBL" id="CP000542">
    <property type="protein sequence ID" value="ABM57480.1"/>
    <property type="molecule type" value="Genomic_DNA"/>
</dbReference>
<dbReference type="RefSeq" id="WP_011809487.1">
    <property type="nucleotide sequence ID" value="NC_008786.1"/>
</dbReference>
<dbReference type="SMR" id="A1WIM3"/>
<dbReference type="STRING" id="391735.Veis_1726"/>
<dbReference type="MEROPS" id="M38.982"/>
<dbReference type="GeneID" id="76460331"/>
<dbReference type="KEGG" id="vei:Veis_1726"/>
<dbReference type="eggNOG" id="COG0804">
    <property type="taxonomic scope" value="Bacteria"/>
</dbReference>
<dbReference type="HOGENOM" id="CLU_000980_0_0_4"/>
<dbReference type="OrthoDB" id="9802793at2"/>
<dbReference type="UniPathway" id="UPA00258">
    <property type="reaction ID" value="UER00370"/>
</dbReference>
<dbReference type="Proteomes" id="UP000000374">
    <property type="component" value="Chromosome"/>
</dbReference>
<dbReference type="GO" id="GO:0005737">
    <property type="term" value="C:cytoplasm"/>
    <property type="evidence" value="ECO:0007669"/>
    <property type="project" value="UniProtKB-SubCell"/>
</dbReference>
<dbReference type="GO" id="GO:0016151">
    <property type="term" value="F:nickel cation binding"/>
    <property type="evidence" value="ECO:0007669"/>
    <property type="project" value="UniProtKB-UniRule"/>
</dbReference>
<dbReference type="GO" id="GO:0009039">
    <property type="term" value="F:urease activity"/>
    <property type="evidence" value="ECO:0007669"/>
    <property type="project" value="UniProtKB-UniRule"/>
</dbReference>
<dbReference type="GO" id="GO:0043419">
    <property type="term" value="P:urea catabolic process"/>
    <property type="evidence" value="ECO:0007669"/>
    <property type="project" value="UniProtKB-UniRule"/>
</dbReference>
<dbReference type="CDD" id="cd00375">
    <property type="entry name" value="Urease_alpha"/>
    <property type="match status" value="1"/>
</dbReference>
<dbReference type="Gene3D" id="3.20.20.140">
    <property type="entry name" value="Metal-dependent hydrolases"/>
    <property type="match status" value="1"/>
</dbReference>
<dbReference type="Gene3D" id="2.30.40.10">
    <property type="entry name" value="Urease, subunit C, domain 1"/>
    <property type="match status" value="1"/>
</dbReference>
<dbReference type="HAMAP" id="MF_01953">
    <property type="entry name" value="Urease_alpha"/>
    <property type="match status" value="1"/>
</dbReference>
<dbReference type="InterPro" id="IPR006680">
    <property type="entry name" value="Amidohydro-rel"/>
</dbReference>
<dbReference type="InterPro" id="IPR011059">
    <property type="entry name" value="Metal-dep_hydrolase_composite"/>
</dbReference>
<dbReference type="InterPro" id="IPR032466">
    <property type="entry name" value="Metal_Hydrolase"/>
</dbReference>
<dbReference type="InterPro" id="IPR011612">
    <property type="entry name" value="Urease_alpha_N_dom"/>
</dbReference>
<dbReference type="InterPro" id="IPR050112">
    <property type="entry name" value="Urease_alpha_subunit"/>
</dbReference>
<dbReference type="InterPro" id="IPR017950">
    <property type="entry name" value="Urease_AS"/>
</dbReference>
<dbReference type="InterPro" id="IPR005848">
    <property type="entry name" value="Urease_asu"/>
</dbReference>
<dbReference type="InterPro" id="IPR017951">
    <property type="entry name" value="Urease_asu_c"/>
</dbReference>
<dbReference type="InterPro" id="IPR029754">
    <property type="entry name" value="Urease_Ni-bd"/>
</dbReference>
<dbReference type="NCBIfam" id="NF009686">
    <property type="entry name" value="PRK13207.1"/>
    <property type="match status" value="1"/>
</dbReference>
<dbReference type="NCBIfam" id="TIGR01792">
    <property type="entry name" value="urease_alph"/>
    <property type="match status" value="1"/>
</dbReference>
<dbReference type="PANTHER" id="PTHR43440">
    <property type="entry name" value="UREASE"/>
    <property type="match status" value="1"/>
</dbReference>
<dbReference type="PANTHER" id="PTHR43440:SF1">
    <property type="entry name" value="UREASE"/>
    <property type="match status" value="1"/>
</dbReference>
<dbReference type="Pfam" id="PF01979">
    <property type="entry name" value="Amidohydro_1"/>
    <property type="match status" value="1"/>
</dbReference>
<dbReference type="Pfam" id="PF00449">
    <property type="entry name" value="Urease_alpha"/>
    <property type="match status" value="1"/>
</dbReference>
<dbReference type="PRINTS" id="PR01752">
    <property type="entry name" value="UREASE"/>
</dbReference>
<dbReference type="SUPFAM" id="SSF51338">
    <property type="entry name" value="Composite domain of metallo-dependent hydrolases"/>
    <property type="match status" value="2"/>
</dbReference>
<dbReference type="SUPFAM" id="SSF51556">
    <property type="entry name" value="Metallo-dependent hydrolases"/>
    <property type="match status" value="1"/>
</dbReference>
<dbReference type="PROSITE" id="PS01120">
    <property type="entry name" value="UREASE_1"/>
    <property type="match status" value="1"/>
</dbReference>
<dbReference type="PROSITE" id="PS00145">
    <property type="entry name" value="UREASE_2"/>
    <property type="match status" value="1"/>
</dbReference>
<dbReference type="PROSITE" id="PS51368">
    <property type="entry name" value="UREASE_3"/>
    <property type="match status" value="1"/>
</dbReference>
<evidence type="ECO:0000255" key="1">
    <source>
        <dbReference type="HAMAP-Rule" id="MF_01953"/>
    </source>
</evidence>
<evidence type="ECO:0000256" key="2">
    <source>
        <dbReference type="SAM" id="MobiDB-lite"/>
    </source>
</evidence>
<gene>
    <name evidence="1" type="primary">ureC</name>
    <name type="ordered locus">Veis_1726</name>
</gene>
<organism>
    <name type="scientific">Verminephrobacter eiseniae (strain EF01-2)</name>
    <dbReference type="NCBI Taxonomy" id="391735"/>
    <lineage>
        <taxon>Bacteria</taxon>
        <taxon>Pseudomonadati</taxon>
        <taxon>Pseudomonadota</taxon>
        <taxon>Betaproteobacteria</taxon>
        <taxon>Burkholderiales</taxon>
        <taxon>Comamonadaceae</taxon>
        <taxon>Verminephrobacter</taxon>
    </lineage>
</organism>
<proteinExistence type="inferred from homology"/>
<sequence>MATIGRRAYAEMFGPTVGDRLRLADTGLILEVEADYTLRAGSYGEEVKFGGGKTIRDGMAQAQHSRAQGAVDTVLTNALIMDAAGIVKADIGLRDGRIAAIGKAGNPDTQAGVDIIIGPGTEVISCEGQIVTAGGIDSHIHFICPQQIEHALASGVTTMLGGGTGPATGTLATTCTPGPWNIERMLQAADAFAVNLGFLGKGNASLPGALHEQIDAGAIGLKLHEDWGSTPAAISNCLDVAEATDTQVALHSDTLNESGFVENTIAAVGGRGICAFHTEGAGGGHAPDILRVVGEANFLPSSTNPTMPYTHNTLDEHVDMLMVCHHLDASIAEDLAFAESRIRKETIAAEDILHDLGAISMMSSDSQAMGRVGEVILRTWQTAHKMKQQRGWLSPPAAGQGAGLSSAAGQGVDHDTRNDNFRIKRYLAKYTINPAIAHGISHEVGSIAVGKWADIVLWKPAFFGVKPALILKGGQIALAAMGDPNASIPTPQPVHYRPMFGAFGGAIAKTSLTFVSQAGLQAGIGQRYGLRKTLSAVRGIRGIRKRDMVHNSYLPQMEIDAQTYMVRADGQWLSCEPATELPLAQRYFLF</sequence>
<name>URE1_VEREI</name>
<feature type="chain" id="PRO_1000070703" description="Urease subunit alpha">
    <location>
        <begin position="1"/>
        <end position="590"/>
    </location>
</feature>
<feature type="domain" description="Urease" evidence="1">
    <location>
        <begin position="134"/>
        <end position="590"/>
    </location>
</feature>
<feature type="region of interest" description="Disordered" evidence="2">
    <location>
        <begin position="388"/>
        <end position="416"/>
    </location>
</feature>
<feature type="compositionally biased region" description="Low complexity" evidence="2">
    <location>
        <begin position="393"/>
        <end position="411"/>
    </location>
</feature>
<feature type="active site" description="Proton donor" evidence="1">
    <location>
        <position position="325"/>
    </location>
</feature>
<feature type="binding site" evidence="1">
    <location>
        <position position="139"/>
    </location>
    <ligand>
        <name>Ni(2+)</name>
        <dbReference type="ChEBI" id="CHEBI:49786"/>
        <label>1</label>
    </ligand>
</feature>
<feature type="binding site" evidence="1">
    <location>
        <position position="141"/>
    </location>
    <ligand>
        <name>Ni(2+)</name>
        <dbReference type="ChEBI" id="CHEBI:49786"/>
        <label>1</label>
    </ligand>
</feature>
<feature type="binding site" description="via carbamate group" evidence="1">
    <location>
        <position position="222"/>
    </location>
    <ligand>
        <name>Ni(2+)</name>
        <dbReference type="ChEBI" id="CHEBI:49786"/>
        <label>1</label>
    </ligand>
</feature>
<feature type="binding site" description="via carbamate group" evidence="1">
    <location>
        <position position="222"/>
    </location>
    <ligand>
        <name>Ni(2+)</name>
        <dbReference type="ChEBI" id="CHEBI:49786"/>
        <label>2</label>
    </ligand>
</feature>
<feature type="binding site" evidence="1">
    <location>
        <position position="224"/>
    </location>
    <ligand>
        <name>substrate</name>
    </ligand>
</feature>
<feature type="binding site" evidence="1">
    <location>
        <position position="251"/>
    </location>
    <ligand>
        <name>Ni(2+)</name>
        <dbReference type="ChEBI" id="CHEBI:49786"/>
        <label>2</label>
    </ligand>
</feature>
<feature type="binding site" evidence="1">
    <location>
        <position position="277"/>
    </location>
    <ligand>
        <name>Ni(2+)</name>
        <dbReference type="ChEBI" id="CHEBI:49786"/>
        <label>2</label>
    </ligand>
</feature>
<feature type="binding site" evidence="1">
    <location>
        <position position="365"/>
    </location>
    <ligand>
        <name>Ni(2+)</name>
        <dbReference type="ChEBI" id="CHEBI:49786"/>
        <label>1</label>
    </ligand>
</feature>
<feature type="modified residue" description="N6-carboxylysine" evidence="1">
    <location>
        <position position="222"/>
    </location>
</feature>
<comment type="catalytic activity">
    <reaction evidence="1">
        <text>urea + 2 H2O + H(+) = hydrogencarbonate + 2 NH4(+)</text>
        <dbReference type="Rhea" id="RHEA:20557"/>
        <dbReference type="ChEBI" id="CHEBI:15377"/>
        <dbReference type="ChEBI" id="CHEBI:15378"/>
        <dbReference type="ChEBI" id="CHEBI:16199"/>
        <dbReference type="ChEBI" id="CHEBI:17544"/>
        <dbReference type="ChEBI" id="CHEBI:28938"/>
        <dbReference type="EC" id="3.5.1.5"/>
    </reaction>
</comment>
<comment type="cofactor">
    <cofactor evidence="1">
        <name>Ni cation</name>
        <dbReference type="ChEBI" id="CHEBI:25516"/>
    </cofactor>
    <text evidence="1">Binds 2 nickel ions per subunit.</text>
</comment>
<comment type="pathway">
    <text evidence="1">Nitrogen metabolism; urea degradation; CO(2) and NH(3) from urea (urease route): step 1/1.</text>
</comment>
<comment type="subunit">
    <text evidence="1">Heterotrimer of UreA (gamma), UreB (beta) and UreC (alpha) subunits. Three heterotrimers associate to form the active enzyme.</text>
</comment>
<comment type="subcellular location">
    <subcellularLocation>
        <location evidence="1">Cytoplasm</location>
    </subcellularLocation>
</comment>
<comment type="PTM">
    <text evidence="1">Carboxylation allows a single lysine to coordinate two nickel ions.</text>
</comment>
<comment type="similarity">
    <text evidence="1">Belongs to the metallo-dependent hydrolases superfamily. Urease alpha subunit family.</text>
</comment>
<accession>A1WIM3</accession>
<reference key="1">
    <citation type="submission" date="2006-12" db="EMBL/GenBank/DDBJ databases">
        <title>Complete sequence of chromosome 1 of Verminephrobacter eiseniae EF01-2.</title>
        <authorList>
            <person name="Copeland A."/>
            <person name="Lucas S."/>
            <person name="Lapidus A."/>
            <person name="Barry K."/>
            <person name="Detter J.C."/>
            <person name="Glavina del Rio T."/>
            <person name="Dalin E."/>
            <person name="Tice H."/>
            <person name="Pitluck S."/>
            <person name="Chertkov O."/>
            <person name="Brettin T."/>
            <person name="Bruce D."/>
            <person name="Han C."/>
            <person name="Tapia R."/>
            <person name="Gilna P."/>
            <person name="Schmutz J."/>
            <person name="Larimer F."/>
            <person name="Land M."/>
            <person name="Hauser L."/>
            <person name="Kyrpides N."/>
            <person name="Kim E."/>
            <person name="Stahl D."/>
            <person name="Richardson P."/>
        </authorList>
    </citation>
    <scope>NUCLEOTIDE SEQUENCE [LARGE SCALE GENOMIC DNA]</scope>
    <source>
        <strain>EF01-2</strain>
    </source>
</reference>
<keyword id="KW-0963">Cytoplasm</keyword>
<keyword id="KW-0378">Hydrolase</keyword>
<keyword id="KW-0479">Metal-binding</keyword>
<keyword id="KW-0533">Nickel</keyword>
<keyword id="KW-1185">Reference proteome</keyword>
<protein>
    <recommendedName>
        <fullName evidence="1">Urease subunit alpha</fullName>
        <ecNumber evidence="1">3.5.1.5</ecNumber>
    </recommendedName>
    <alternativeName>
        <fullName evidence="1">Urea amidohydrolase subunit alpha</fullName>
    </alternativeName>
</protein>